<accession>Q4J8L7</accession>
<keyword id="KW-0066">ATP synthesis</keyword>
<keyword id="KW-1003">Cell membrane</keyword>
<keyword id="KW-0375">Hydrogen ion transport</keyword>
<keyword id="KW-0406">Ion transport</keyword>
<keyword id="KW-0472">Membrane</keyword>
<keyword id="KW-1185">Reference proteome</keyword>
<keyword id="KW-0813">Transport</keyword>
<dbReference type="EMBL" id="CP000077">
    <property type="protein sequence ID" value="AAY80863.1"/>
    <property type="molecule type" value="Genomic_DNA"/>
</dbReference>
<dbReference type="RefSeq" id="WP_011278365.1">
    <property type="nucleotide sequence ID" value="NC_007181.1"/>
</dbReference>
<dbReference type="SMR" id="Q4J8L7"/>
<dbReference type="STRING" id="330779.Saci_1550"/>
<dbReference type="GeneID" id="14552043"/>
<dbReference type="KEGG" id="sai:Saci_1550"/>
<dbReference type="PATRIC" id="fig|330779.12.peg.1490"/>
<dbReference type="eggNOG" id="arCOG04101">
    <property type="taxonomic scope" value="Archaea"/>
</dbReference>
<dbReference type="HOGENOM" id="CLU_069688_2_2_2"/>
<dbReference type="Proteomes" id="UP000001018">
    <property type="component" value="Chromosome"/>
</dbReference>
<dbReference type="GO" id="GO:0005886">
    <property type="term" value="C:plasma membrane"/>
    <property type="evidence" value="ECO:0007669"/>
    <property type="project" value="UniProtKB-SubCell"/>
</dbReference>
<dbReference type="GO" id="GO:0005524">
    <property type="term" value="F:ATP binding"/>
    <property type="evidence" value="ECO:0007669"/>
    <property type="project" value="UniProtKB-UniRule"/>
</dbReference>
<dbReference type="GO" id="GO:0046933">
    <property type="term" value="F:proton-transporting ATP synthase activity, rotational mechanism"/>
    <property type="evidence" value="ECO:0007669"/>
    <property type="project" value="UniProtKB-UniRule"/>
</dbReference>
<dbReference type="GO" id="GO:0046961">
    <property type="term" value="F:proton-transporting ATPase activity, rotational mechanism"/>
    <property type="evidence" value="ECO:0007669"/>
    <property type="project" value="InterPro"/>
</dbReference>
<dbReference type="GO" id="GO:0042777">
    <property type="term" value="P:proton motive force-driven plasma membrane ATP synthesis"/>
    <property type="evidence" value="ECO:0007669"/>
    <property type="project" value="UniProtKB-UniRule"/>
</dbReference>
<dbReference type="Gene3D" id="1.10.287.3240">
    <property type="match status" value="1"/>
</dbReference>
<dbReference type="HAMAP" id="MF_00271">
    <property type="entry name" value="ATP_synth_D_arch"/>
    <property type="match status" value="1"/>
</dbReference>
<dbReference type="InterPro" id="IPR002699">
    <property type="entry name" value="V_ATPase_D"/>
</dbReference>
<dbReference type="NCBIfam" id="NF001544">
    <property type="entry name" value="PRK00373.1-3"/>
    <property type="match status" value="1"/>
</dbReference>
<dbReference type="NCBIfam" id="TIGR00309">
    <property type="entry name" value="V_ATPase_subD"/>
    <property type="match status" value="1"/>
</dbReference>
<dbReference type="PANTHER" id="PTHR11671">
    <property type="entry name" value="V-TYPE ATP SYNTHASE SUBUNIT D"/>
    <property type="match status" value="1"/>
</dbReference>
<dbReference type="Pfam" id="PF01813">
    <property type="entry name" value="ATP-synt_D"/>
    <property type="match status" value="1"/>
</dbReference>
<organism>
    <name type="scientific">Sulfolobus acidocaldarius (strain ATCC 33909 / DSM 639 / JCM 8929 / NBRC 15157 / NCIMB 11770)</name>
    <dbReference type="NCBI Taxonomy" id="330779"/>
    <lineage>
        <taxon>Archaea</taxon>
        <taxon>Thermoproteota</taxon>
        <taxon>Thermoprotei</taxon>
        <taxon>Sulfolobales</taxon>
        <taxon>Sulfolobaceae</taxon>
        <taxon>Sulfolobus</taxon>
    </lineage>
</organism>
<gene>
    <name evidence="1" type="primary">atpD</name>
    <name type="ordered locus">Saci_1550</name>
</gene>
<name>AATD_SULAC</name>
<reference key="1">
    <citation type="journal article" date="2005" name="J. Bacteriol.">
        <title>The genome of Sulfolobus acidocaldarius, a model organism of the Crenarchaeota.</title>
        <authorList>
            <person name="Chen L."/>
            <person name="Bruegger K."/>
            <person name="Skovgaard M."/>
            <person name="Redder P."/>
            <person name="She Q."/>
            <person name="Torarinsson E."/>
            <person name="Greve B."/>
            <person name="Awayez M."/>
            <person name="Zibat A."/>
            <person name="Klenk H.-P."/>
            <person name="Garrett R.A."/>
        </authorList>
    </citation>
    <scope>NUCLEOTIDE SEQUENCE [LARGE SCALE GENOMIC DNA]</scope>
    <source>
        <strain>ATCC 33909 / DSM 639 / JCM 8929 / NBRC 15157 / NCIMB 11770</strain>
    </source>
</reference>
<proteinExistence type="inferred from homology"/>
<feature type="chain" id="PRO_0000144258" description="A-type ATP synthase subunit D">
    <location>
        <begin position="1"/>
        <end position="209"/>
    </location>
</feature>
<evidence type="ECO:0000255" key="1">
    <source>
        <dbReference type="HAMAP-Rule" id="MF_00271"/>
    </source>
</evidence>
<sequence length="209" mass="24341">MSSRKVLPTKINLINLRRQIRLIRTIKRLLENKREVLLLYLRQYADEYEKVYNEVSKVLSDVYSTYLQGVASEGLSTIQTYADSIPSSLNVNTSIKVLFGVKIPVVDLDESTIQQQPFGNLEISPYILKSREQMSYAFKKILTLIEIESSIRALSGELRKTQRLINAIDTSILPFYQSSSKYIKSVLDDRTREEFTRLKMVRKLLQRRR</sequence>
<comment type="function">
    <text evidence="1">Component of the A-type ATP synthase that produces ATP from ADP in the presence of a proton gradient across the membrane.</text>
</comment>
<comment type="subunit">
    <text evidence="1">Has multiple subunits with at least A(3), B(3), C, D, E, F, H, I and proteolipid K(x).</text>
</comment>
<comment type="subcellular location">
    <subcellularLocation>
        <location evidence="1">Cell membrane</location>
        <topology evidence="1">Peripheral membrane protein</topology>
    </subcellularLocation>
</comment>
<comment type="similarity">
    <text evidence="1">Belongs to the V-ATPase D subunit family.</text>
</comment>
<protein>
    <recommendedName>
        <fullName evidence="1">A-type ATP synthase subunit D</fullName>
    </recommendedName>
</protein>